<comment type="function">
    <text evidence="1">This protein binds specifically to 23S rRNA; its binding is stimulated by other ribosomal proteins, e.g. L4, L17, and L20. It is important during the early stages of 50S assembly. It makes multiple contacts with different domains of the 23S rRNA in the assembled 50S subunit and ribosome (By similarity).</text>
</comment>
<comment type="function">
    <text evidence="1">The globular domain of the protein is located near the polypeptide exit tunnel on the outside of the subunit, while an extended beta-hairpin is found that lines the wall of the exit tunnel in the center of the 70S ribosome.</text>
</comment>
<comment type="subunit">
    <text evidence="1">Part of the 50S ribosomal subunit.</text>
</comment>
<comment type="similarity">
    <text evidence="1">Belongs to the universal ribosomal protein uL22 family.</text>
</comment>
<evidence type="ECO:0000255" key="1">
    <source>
        <dbReference type="HAMAP-Rule" id="MF_01331"/>
    </source>
</evidence>
<evidence type="ECO:0000305" key="2"/>
<accession>B5FJK9</accession>
<feature type="chain" id="PRO_1000142302" description="Large ribosomal subunit protein uL22">
    <location>
        <begin position="1"/>
        <end position="110"/>
    </location>
</feature>
<keyword id="KW-0687">Ribonucleoprotein</keyword>
<keyword id="KW-0689">Ribosomal protein</keyword>
<keyword id="KW-0694">RNA-binding</keyword>
<keyword id="KW-0699">rRNA-binding</keyword>
<reference key="1">
    <citation type="journal article" date="2011" name="J. Bacteriol.">
        <title>Comparative genomics of 28 Salmonella enterica isolates: evidence for CRISPR-mediated adaptive sublineage evolution.</title>
        <authorList>
            <person name="Fricke W.F."/>
            <person name="Mammel M.K."/>
            <person name="McDermott P.F."/>
            <person name="Tartera C."/>
            <person name="White D.G."/>
            <person name="Leclerc J.E."/>
            <person name="Ravel J."/>
            <person name="Cebula T.A."/>
        </authorList>
    </citation>
    <scope>NUCLEOTIDE SEQUENCE [LARGE SCALE GENOMIC DNA]</scope>
    <source>
        <strain>CT_02021853</strain>
    </source>
</reference>
<name>RL22_SALDC</name>
<sequence length="110" mass="12226">METIAKHRHARSSAQKVRLVADLIRGKKVSQALDILTYTNKKAAVLVKKVLESAIANAEHNDGADIDDLKVTKIFVDEGPSMKRIMPRAKGRADRILKRTSHITVVVSDR</sequence>
<protein>
    <recommendedName>
        <fullName evidence="1">Large ribosomal subunit protein uL22</fullName>
    </recommendedName>
    <alternativeName>
        <fullName evidence="2">50S ribosomal protein L22</fullName>
    </alternativeName>
</protein>
<gene>
    <name evidence="1" type="primary">rplV</name>
    <name type="ordered locus">SeD_A3802</name>
</gene>
<organism>
    <name type="scientific">Salmonella dublin (strain CT_02021853)</name>
    <dbReference type="NCBI Taxonomy" id="439851"/>
    <lineage>
        <taxon>Bacteria</taxon>
        <taxon>Pseudomonadati</taxon>
        <taxon>Pseudomonadota</taxon>
        <taxon>Gammaproteobacteria</taxon>
        <taxon>Enterobacterales</taxon>
        <taxon>Enterobacteriaceae</taxon>
        <taxon>Salmonella</taxon>
    </lineage>
</organism>
<dbReference type="EMBL" id="CP001144">
    <property type="protein sequence ID" value="ACH77906.1"/>
    <property type="molecule type" value="Genomic_DNA"/>
</dbReference>
<dbReference type="RefSeq" id="WP_000447529.1">
    <property type="nucleotide sequence ID" value="NC_011205.1"/>
</dbReference>
<dbReference type="SMR" id="B5FJK9"/>
<dbReference type="GeneID" id="93778672"/>
<dbReference type="KEGG" id="sed:SeD_A3802"/>
<dbReference type="HOGENOM" id="CLU_083987_3_3_6"/>
<dbReference type="Proteomes" id="UP000008322">
    <property type="component" value="Chromosome"/>
</dbReference>
<dbReference type="GO" id="GO:0022625">
    <property type="term" value="C:cytosolic large ribosomal subunit"/>
    <property type="evidence" value="ECO:0007669"/>
    <property type="project" value="TreeGrafter"/>
</dbReference>
<dbReference type="GO" id="GO:0019843">
    <property type="term" value="F:rRNA binding"/>
    <property type="evidence" value="ECO:0007669"/>
    <property type="project" value="UniProtKB-UniRule"/>
</dbReference>
<dbReference type="GO" id="GO:0003735">
    <property type="term" value="F:structural constituent of ribosome"/>
    <property type="evidence" value="ECO:0007669"/>
    <property type="project" value="InterPro"/>
</dbReference>
<dbReference type="GO" id="GO:0006412">
    <property type="term" value="P:translation"/>
    <property type="evidence" value="ECO:0007669"/>
    <property type="project" value="UniProtKB-UniRule"/>
</dbReference>
<dbReference type="CDD" id="cd00336">
    <property type="entry name" value="Ribosomal_L22"/>
    <property type="match status" value="1"/>
</dbReference>
<dbReference type="FunFam" id="3.90.470.10:FF:000001">
    <property type="entry name" value="50S ribosomal protein L22"/>
    <property type="match status" value="1"/>
</dbReference>
<dbReference type="Gene3D" id="3.90.470.10">
    <property type="entry name" value="Ribosomal protein L22/L17"/>
    <property type="match status" value="1"/>
</dbReference>
<dbReference type="HAMAP" id="MF_01331_B">
    <property type="entry name" value="Ribosomal_uL22_B"/>
    <property type="match status" value="1"/>
</dbReference>
<dbReference type="InterPro" id="IPR001063">
    <property type="entry name" value="Ribosomal_uL22"/>
</dbReference>
<dbReference type="InterPro" id="IPR005727">
    <property type="entry name" value="Ribosomal_uL22_bac/chlpt-type"/>
</dbReference>
<dbReference type="InterPro" id="IPR047867">
    <property type="entry name" value="Ribosomal_uL22_bac/org-type"/>
</dbReference>
<dbReference type="InterPro" id="IPR018260">
    <property type="entry name" value="Ribosomal_uL22_CS"/>
</dbReference>
<dbReference type="InterPro" id="IPR036394">
    <property type="entry name" value="Ribosomal_uL22_sf"/>
</dbReference>
<dbReference type="NCBIfam" id="TIGR01044">
    <property type="entry name" value="rplV_bact"/>
    <property type="match status" value="1"/>
</dbReference>
<dbReference type="PANTHER" id="PTHR13501">
    <property type="entry name" value="CHLOROPLAST 50S RIBOSOMAL PROTEIN L22-RELATED"/>
    <property type="match status" value="1"/>
</dbReference>
<dbReference type="PANTHER" id="PTHR13501:SF8">
    <property type="entry name" value="LARGE RIBOSOMAL SUBUNIT PROTEIN UL22M"/>
    <property type="match status" value="1"/>
</dbReference>
<dbReference type="Pfam" id="PF00237">
    <property type="entry name" value="Ribosomal_L22"/>
    <property type="match status" value="1"/>
</dbReference>
<dbReference type="SUPFAM" id="SSF54843">
    <property type="entry name" value="Ribosomal protein L22"/>
    <property type="match status" value="1"/>
</dbReference>
<dbReference type="PROSITE" id="PS00464">
    <property type="entry name" value="RIBOSOMAL_L22"/>
    <property type="match status" value="1"/>
</dbReference>
<proteinExistence type="inferred from homology"/>